<organism>
    <name type="scientific">Rattus norvegicus</name>
    <name type="common">Rat</name>
    <dbReference type="NCBI Taxonomy" id="10116"/>
    <lineage>
        <taxon>Eukaryota</taxon>
        <taxon>Metazoa</taxon>
        <taxon>Chordata</taxon>
        <taxon>Craniata</taxon>
        <taxon>Vertebrata</taxon>
        <taxon>Euteleostomi</taxon>
        <taxon>Mammalia</taxon>
        <taxon>Eutheria</taxon>
        <taxon>Euarchontoglires</taxon>
        <taxon>Glires</taxon>
        <taxon>Rodentia</taxon>
        <taxon>Myomorpha</taxon>
        <taxon>Muroidea</taxon>
        <taxon>Muridae</taxon>
        <taxon>Murinae</taxon>
        <taxon>Rattus</taxon>
    </lineage>
</organism>
<feature type="chain" id="PRO_0000242676" description="Ubiquitin domain-containing protein 1">
    <location>
        <begin position="1"/>
        <end position="227"/>
    </location>
</feature>
<feature type="domain" description="Ubiquitin-like" evidence="2">
    <location>
        <begin position="149"/>
        <end position="224"/>
    </location>
</feature>
<feature type="region of interest" description="Disordered" evidence="3">
    <location>
        <begin position="1"/>
        <end position="35"/>
    </location>
</feature>
<feature type="compositionally biased region" description="Basic and acidic residues" evidence="3">
    <location>
        <begin position="24"/>
        <end position="35"/>
    </location>
</feature>
<reference key="1">
    <citation type="journal article" date="2004" name="Genome Res.">
        <title>The status, quality, and expansion of the NIH full-length cDNA project: the Mammalian Gene Collection (MGC).</title>
        <authorList>
            <consortium name="The MGC Project Team"/>
        </authorList>
    </citation>
    <scope>NUCLEOTIDE SEQUENCE [LARGE SCALE MRNA]</scope>
    <source>
        <tissue>Testis</tissue>
    </source>
</reference>
<accession>Q68FV8</accession>
<sequence>MGNCVGRQRRERPAAPGHPRKRAGRNEPLKKERLKWKSDYPMTDGQLRSKRDEFWDTAPAFEGRKEIWDALKAAAYAAEANDHELAQAILDGASITLPHGTLCECYDELGNRYQLPIYCLSPPVNLLLEHTEEESLEPPEPTPSVRREFPLKVRLSTGKDVRLSASLPDTVGQLKRQLHSQEGIEPSWQRWFFSGKLLTDRTRLQETKIQKDFVIQVIINQPPPPQD</sequence>
<evidence type="ECO:0000250" key="1">
    <source>
        <dbReference type="UniProtKB" id="Q9HAC8"/>
    </source>
</evidence>
<evidence type="ECO:0000255" key="2">
    <source>
        <dbReference type="PROSITE-ProRule" id="PRU00214"/>
    </source>
</evidence>
<evidence type="ECO:0000256" key="3">
    <source>
        <dbReference type="SAM" id="MobiDB-lite"/>
    </source>
</evidence>
<protein>
    <recommendedName>
        <fullName>Ubiquitin domain-containing protein 1</fullName>
    </recommendedName>
</protein>
<name>UBTD1_RAT</name>
<gene>
    <name type="primary">Ubtd1</name>
</gene>
<proteinExistence type="evidence at transcript level"/>
<dbReference type="EMBL" id="BC079260">
    <property type="protein sequence ID" value="AAH79260.1"/>
    <property type="molecule type" value="mRNA"/>
</dbReference>
<dbReference type="RefSeq" id="NP_001013171.1">
    <property type="nucleotide sequence ID" value="NM_001013153.1"/>
</dbReference>
<dbReference type="SMR" id="Q68FV8"/>
<dbReference type="FunCoup" id="Q68FV8">
    <property type="interactions" value="640"/>
</dbReference>
<dbReference type="STRING" id="10116.ENSRNOP00000018485"/>
<dbReference type="GlyGen" id="Q68FV8">
    <property type="glycosylation" value="1 site"/>
</dbReference>
<dbReference type="PhosphoSitePlus" id="Q68FV8"/>
<dbReference type="SwissPalm" id="Q68FV8"/>
<dbReference type="PaxDb" id="10116-ENSRNOP00000018485"/>
<dbReference type="Ensembl" id="ENSRNOT00000018485.7">
    <property type="protein sequence ID" value="ENSRNOP00000018485.5"/>
    <property type="gene ID" value="ENSRNOG00000013813.7"/>
</dbReference>
<dbReference type="GeneID" id="309373"/>
<dbReference type="KEGG" id="rno:309373"/>
<dbReference type="UCSC" id="RGD:1308172">
    <property type="organism name" value="rat"/>
</dbReference>
<dbReference type="AGR" id="RGD:1308172"/>
<dbReference type="CTD" id="80019"/>
<dbReference type="RGD" id="1308172">
    <property type="gene designation" value="Ubtd1"/>
</dbReference>
<dbReference type="eggNOG" id="KOG0013">
    <property type="taxonomic scope" value="Eukaryota"/>
</dbReference>
<dbReference type="GeneTree" id="ENSGT00940000158630"/>
<dbReference type="HOGENOM" id="CLU_070348_0_0_1"/>
<dbReference type="InParanoid" id="Q68FV8"/>
<dbReference type="OMA" id="GCMGRYL"/>
<dbReference type="OrthoDB" id="1640476at2759"/>
<dbReference type="PhylomeDB" id="Q68FV8"/>
<dbReference type="CD-CODE" id="246D7041">
    <property type="entry name" value="Chromatoid body"/>
</dbReference>
<dbReference type="PRO" id="PR:Q68FV8"/>
<dbReference type="Proteomes" id="UP000002494">
    <property type="component" value="Chromosome 1"/>
</dbReference>
<dbReference type="Bgee" id="ENSRNOG00000013813">
    <property type="expression patterns" value="Expressed in testis and 19 other cell types or tissues"/>
</dbReference>
<dbReference type="CDD" id="cd17120">
    <property type="entry name" value="Ubl_UBTD1"/>
    <property type="match status" value="1"/>
</dbReference>
<dbReference type="Gene3D" id="3.10.20.90">
    <property type="entry name" value="Phosphatidylinositol 3-kinase Catalytic Subunit, Chain A, domain 1"/>
    <property type="match status" value="1"/>
</dbReference>
<dbReference type="Gene3D" id="1.20.225.20">
    <property type="entry name" value="Ub domain-containing protein, DC-UbP/UBTD2, N-terminal domain"/>
    <property type="match status" value="1"/>
</dbReference>
<dbReference type="InterPro" id="IPR032752">
    <property type="entry name" value="DC-UbP/UBTD2_N"/>
</dbReference>
<dbReference type="InterPro" id="IPR038169">
    <property type="entry name" value="DC-UbP/UBTD2_N_sf"/>
</dbReference>
<dbReference type="InterPro" id="IPR000626">
    <property type="entry name" value="Ubiquitin-like_dom"/>
</dbReference>
<dbReference type="InterPro" id="IPR029071">
    <property type="entry name" value="Ubiquitin-like_domsf"/>
</dbReference>
<dbReference type="InterPro" id="IPR019956">
    <property type="entry name" value="Ubiquitin_dom"/>
</dbReference>
<dbReference type="InterPro" id="IPR039869">
    <property type="entry name" value="UBTD1/2"/>
</dbReference>
<dbReference type="PANTHER" id="PTHR13609">
    <property type="entry name" value="UBIQUITIN DOMAIN CONTAINING 1 PROTEIN-RELATED"/>
    <property type="match status" value="1"/>
</dbReference>
<dbReference type="Pfam" id="PF16455">
    <property type="entry name" value="UBD"/>
    <property type="match status" value="1"/>
</dbReference>
<dbReference type="Pfam" id="PF00240">
    <property type="entry name" value="ubiquitin"/>
    <property type="match status" value="1"/>
</dbReference>
<dbReference type="PRINTS" id="PR00348">
    <property type="entry name" value="UBIQUITIN"/>
</dbReference>
<dbReference type="SMART" id="SM00213">
    <property type="entry name" value="UBQ"/>
    <property type="match status" value="1"/>
</dbReference>
<dbReference type="SUPFAM" id="SSF54236">
    <property type="entry name" value="Ubiquitin-like"/>
    <property type="match status" value="1"/>
</dbReference>
<dbReference type="PROSITE" id="PS50053">
    <property type="entry name" value="UBIQUITIN_2"/>
    <property type="match status" value="1"/>
</dbReference>
<comment type="function">
    <text evidence="1">May be involved in the regulation of cellular senescence through a positive feedback loop with TP53. Is a TP53 downstream target gene that increases the stability of TP53 protein by promoting the ubiquitination and degradation of MDM2.</text>
</comment>
<comment type="subunit">
    <text evidence="1">Interacts with UBTD1.</text>
</comment>
<keyword id="KW-1185">Reference proteome</keyword>